<protein>
    <recommendedName>
        <fullName>Pre-rRNA-processing protein PNO1</fullName>
    </recommendedName>
</protein>
<gene>
    <name type="primary">PNO1</name>
    <name type="ORF">SNOG_03777</name>
</gene>
<reference key="1">
    <citation type="journal article" date="2007" name="Plant Cell">
        <title>Dothideomycete-plant interactions illuminated by genome sequencing and EST analysis of the wheat pathogen Stagonospora nodorum.</title>
        <authorList>
            <person name="Hane J.K."/>
            <person name="Lowe R.G.T."/>
            <person name="Solomon P.S."/>
            <person name="Tan K.-C."/>
            <person name="Schoch C.L."/>
            <person name="Spatafora J.W."/>
            <person name="Crous P.W."/>
            <person name="Kodira C.D."/>
            <person name="Birren B.W."/>
            <person name="Galagan J.E."/>
            <person name="Torriani S.F.F."/>
            <person name="McDonald B.A."/>
            <person name="Oliver R.P."/>
        </authorList>
    </citation>
    <scope>NUCLEOTIDE SEQUENCE [LARGE SCALE GENOMIC DNA]</scope>
    <source>
        <strain>SN15 / ATCC MYA-4574 / FGSC 10173</strain>
    </source>
</reference>
<name>PNO1_PHANO</name>
<dbReference type="EMBL" id="CH445329">
    <property type="protein sequence ID" value="EAT88982.1"/>
    <property type="molecule type" value="Genomic_DNA"/>
</dbReference>
<dbReference type="RefSeq" id="XP_001794323.1">
    <property type="nucleotide sequence ID" value="XM_001794271.1"/>
</dbReference>
<dbReference type="SMR" id="Q0UWT7"/>
<dbReference type="FunCoup" id="Q0UWT7">
    <property type="interactions" value="851"/>
</dbReference>
<dbReference type="STRING" id="321614.Q0UWT7"/>
<dbReference type="EnsemblFungi" id="SNOT_03777">
    <property type="protein sequence ID" value="SNOT_03777"/>
    <property type="gene ID" value="SNOG_03777"/>
</dbReference>
<dbReference type="GeneID" id="5971186"/>
<dbReference type="KEGG" id="pno:SNOG_03777"/>
<dbReference type="VEuPathDB" id="FungiDB:JI435_037770"/>
<dbReference type="eggNOG" id="KOG3273">
    <property type="taxonomic scope" value="Eukaryota"/>
</dbReference>
<dbReference type="HOGENOM" id="CLU_064992_0_2_1"/>
<dbReference type="InParanoid" id="Q0UWT7"/>
<dbReference type="OMA" id="TPLRNNW"/>
<dbReference type="OrthoDB" id="1932641at2759"/>
<dbReference type="Proteomes" id="UP000001055">
    <property type="component" value="Unassembled WGS sequence"/>
</dbReference>
<dbReference type="GO" id="GO:0005737">
    <property type="term" value="C:cytoplasm"/>
    <property type="evidence" value="ECO:0007669"/>
    <property type="project" value="UniProtKB-SubCell"/>
</dbReference>
<dbReference type="GO" id="GO:0005730">
    <property type="term" value="C:nucleolus"/>
    <property type="evidence" value="ECO:0007669"/>
    <property type="project" value="UniProtKB-SubCell"/>
</dbReference>
<dbReference type="GO" id="GO:0005634">
    <property type="term" value="C:nucleus"/>
    <property type="evidence" value="ECO:0000318"/>
    <property type="project" value="GO_Central"/>
</dbReference>
<dbReference type="GO" id="GO:0042134">
    <property type="term" value="F:rRNA primary transcript binding"/>
    <property type="evidence" value="ECO:0007669"/>
    <property type="project" value="EnsemblFungi"/>
</dbReference>
<dbReference type="GO" id="GO:0051082">
    <property type="term" value="F:unfolded protein binding"/>
    <property type="evidence" value="ECO:0007669"/>
    <property type="project" value="EnsemblFungi"/>
</dbReference>
<dbReference type="GO" id="GO:0000447">
    <property type="term" value="P:endonucleolytic cleavage in ITS1 to separate SSU-rRNA from 5.8S rRNA and LSU-rRNA from tricistronic rRNA transcript (SSU-rRNA, 5.8S rRNA, LSU-rRNA)"/>
    <property type="evidence" value="ECO:0007669"/>
    <property type="project" value="EnsemblFungi"/>
</dbReference>
<dbReference type="GO" id="GO:0000472">
    <property type="term" value="P:endonucleolytic cleavage to generate mature 5'-end of SSU-rRNA from (SSU-rRNA, 5.8S rRNA, LSU-rRNA)"/>
    <property type="evidence" value="ECO:0007669"/>
    <property type="project" value="EnsemblFungi"/>
</dbReference>
<dbReference type="GO" id="GO:0043248">
    <property type="term" value="P:proteasome assembly"/>
    <property type="evidence" value="ECO:0007669"/>
    <property type="project" value="EnsemblFungi"/>
</dbReference>
<dbReference type="GO" id="GO:0000056">
    <property type="term" value="P:ribosomal small subunit export from nucleus"/>
    <property type="evidence" value="ECO:0007669"/>
    <property type="project" value="EnsemblFungi"/>
</dbReference>
<dbReference type="GO" id="GO:0042255">
    <property type="term" value="P:ribosome assembly"/>
    <property type="evidence" value="ECO:0007669"/>
    <property type="project" value="EnsemblFungi"/>
</dbReference>
<dbReference type="CDD" id="cd22391">
    <property type="entry name" value="KH-I_PNO1_rpt1"/>
    <property type="match status" value="1"/>
</dbReference>
<dbReference type="CDD" id="cd22392">
    <property type="entry name" value="KH-I_PNO1_rpt2"/>
    <property type="match status" value="1"/>
</dbReference>
<dbReference type="FunFam" id="3.30.1370.10:FF:000009">
    <property type="entry name" value="RNA-binding protein PNO1"/>
    <property type="match status" value="1"/>
</dbReference>
<dbReference type="FunFam" id="3.30.1370.10:FF:000048">
    <property type="entry name" value="RNA-binding protein PNO1 isoform X2"/>
    <property type="match status" value="1"/>
</dbReference>
<dbReference type="Gene3D" id="3.30.1370.10">
    <property type="entry name" value="K Homology domain, type 1"/>
    <property type="match status" value="1"/>
</dbReference>
<dbReference type="InterPro" id="IPR055212">
    <property type="entry name" value="KH-I_PNO1_first"/>
</dbReference>
<dbReference type="InterPro" id="IPR004087">
    <property type="entry name" value="KH_dom"/>
</dbReference>
<dbReference type="InterPro" id="IPR036612">
    <property type="entry name" value="KH_dom_type_1_sf"/>
</dbReference>
<dbReference type="InterPro" id="IPR055211">
    <property type="entry name" value="KH_PNO1_2nd"/>
</dbReference>
<dbReference type="PANTHER" id="PTHR12826">
    <property type="entry name" value="RIBONUCLEASE Y"/>
    <property type="match status" value="1"/>
</dbReference>
<dbReference type="PANTHER" id="PTHR12826:SF13">
    <property type="entry name" value="RNA-BINDING PROTEIN PNO1"/>
    <property type="match status" value="1"/>
</dbReference>
<dbReference type="Pfam" id="PF22891">
    <property type="entry name" value="KH_PNO1_2nd"/>
    <property type="match status" value="1"/>
</dbReference>
<dbReference type="SMART" id="SM00322">
    <property type="entry name" value="KH"/>
    <property type="match status" value="1"/>
</dbReference>
<dbReference type="SUPFAM" id="SSF54791">
    <property type="entry name" value="Eukaryotic type KH-domain (KH-domain type I)"/>
    <property type="match status" value="1"/>
</dbReference>
<comment type="function">
    <text evidence="1">Required for small ribosomal subunit (SSU) synthesis. Has a role in the processing of early nucleolar and late cytoplasmic pre-RNA species (By similarity).</text>
</comment>
<comment type="subunit">
    <text evidence="1">Component of the small ribosomal subunit, ribosomal RNA processing complex (SSU RRP complex).</text>
</comment>
<comment type="subcellular location">
    <subcellularLocation>
        <location evidence="2">Cytoplasm</location>
    </subcellularLocation>
    <subcellularLocation>
        <location evidence="2">Nucleus</location>
        <location evidence="2">Nucleolus</location>
    </subcellularLocation>
</comment>
<comment type="similarity">
    <text evidence="4">Belongs to the PNO1 family.</text>
</comment>
<keyword id="KW-0963">Cytoplasm</keyword>
<keyword id="KW-0539">Nucleus</keyword>
<keyword id="KW-0690">Ribosome biogenesis</keyword>
<keyword id="KW-0694">RNA-binding</keyword>
<organism>
    <name type="scientific">Phaeosphaeria nodorum (strain SN15 / ATCC MYA-4574 / FGSC 10173)</name>
    <name type="common">Glume blotch fungus</name>
    <name type="synonym">Parastagonospora nodorum</name>
    <dbReference type="NCBI Taxonomy" id="321614"/>
    <lineage>
        <taxon>Eukaryota</taxon>
        <taxon>Fungi</taxon>
        <taxon>Dikarya</taxon>
        <taxon>Ascomycota</taxon>
        <taxon>Pezizomycotina</taxon>
        <taxon>Dothideomycetes</taxon>
        <taxon>Pleosporomycetidae</taxon>
        <taxon>Pleosporales</taxon>
        <taxon>Pleosporineae</taxon>
        <taxon>Phaeosphaeriaceae</taxon>
        <taxon>Parastagonospora</taxon>
    </lineage>
</organism>
<accession>Q0UWT7</accession>
<feature type="chain" id="PRO_0000278373" description="Pre-rRNA-processing protein PNO1">
    <location>
        <begin position="1"/>
        <end position="262"/>
    </location>
</feature>
<feature type="domain" description="KH">
    <location>
        <begin position="183"/>
        <end position="235"/>
    </location>
</feature>
<feature type="region of interest" description="Disordered" evidence="3">
    <location>
        <begin position="1"/>
        <end position="34"/>
    </location>
</feature>
<feature type="compositionally biased region" description="Acidic residues" evidence="3">
    <location>
        <begin position="14"/>
        <end position="23"/>
    </location>
</feature>
<proteinExistence type="inferred from homology"/>
<sequence>MPAPTALQRRPEEFAENVSEDVSMEASAVPLPEDDADLIDMSIEPGTAIEAAPDALADDMPMTDESGRPKFAPAKSIPLAFRHEQRKVPIPPHRMTPLKTAWPKIYPPLVEHLKLQVRMNIKTKSVELRTSKSTTDTGALQKGEDFVKAFTLGFDVDDAIALLRLDDLYIETFEIKDVKTLQGEHMGRAIGRIAGKDGKTKFAIENASRTRVVLADSKIHILGGFKNIHVAREAIVSLILGQNPSKVYGNLRTVAGRMKERF</sequence>
<evidence type="ECO:0000250" key="1"/>
<evidence type="ECO:0000250" key="2">
    <source>
        <dbReference type="UniProtKB" id="Q99216"/>
    </source>
</evidence>
<evidence type="ECO:0000256" key="3">
    <source>
        <dbReference type="SAM" id="MobiDB-lite"/>
    </source>
</evidence>
<evidence type="ECO:0000305" key="4"/>